<accession>Q8SSK3</accession>
<comment type="function">
    <text evidence="1">Catalyzes the covalent attachment of ubiquitin to other proteins so as to signal them for selective protein degradation. Involved in the formation of multiubiquitin chains.</text>
</comment>
<comment type="catalytic activity">
    <reaction evidence="1">
        <text>S-ubiquitinyl-[E1 ubiquitin-activating enzyme]-L-cysteine + [E2 ubiquitin-conjugating enzyme]-L-cysteine = [E1 ubiquitin-activating enzyme]-L-cysteine + S-ubiquitinyl-[E2 ubiquitin-conjugating enzyme]-L-cysteine.</text>
        <dbReference type="EC" id="2.3.2.23"/>
    </reaction>
</comment>
<comment type="pathway">
    <text evidence="1">Protein modification; protein ubiquitination.</text>
</comment>
<comment type="developmental stage">
    <text evidence="3">Expressed in late sporogonial stages.</text>
</comment>
<comment type="similarity">
    <text evidence="1">Belongs to the ubiquitin-conjugating enzyme family.</text>
</comment>
<dbReference type="EC" id="2.3.2.23"/>
<dbReference type="EMBL" id="AL391737">
    <property type="protein sequence ID" value="CAD24972.1"/>
    <property type="molecule type" value="Genomic_DNA"/>
</dbReference>
<dbReference type="RefSeq" id="NP_001402187.1">
    <property type="nucleotide sequence ID" value="NM_001415166.1"/>
</dbReference>
<dbReference type="RefSeq" id="XP_965937.1">
    <property type="nucleotide sequence ID" value="XM_960844.1"/>
</dbReference>
<dbReference type="SMR" id="Q8SSK3"/>
<dbReference type="STRING" id="284813.Q8SSK3"/>
<dbReference type="GeneID" id="860278"/>
<dbReference type="VEuPathDB" id="MicrosporidiaDB:ECU01_1010"/>
<dbReference type="HOGENOM" id="CLU_030988_10_1_1"/>
<dbReference type="InParanoid" id="Q8SSK3"/>
<dbReference type="OMA" id="QCINTIV"/>
<dbReference type="OrthoDB" id="19692at2759"/>
<dbReference type="UniPathway" id="UPA00143"/>
<dbReference type="Proteomes" id="UP000000819">
    <property type="component" value="Chromosome I"/>
</dbReference>
<dbReference type="GO" id="GO:0061631">
    <property type="term" value="F:ubiquitin conjugating enzyme activity"/>
    <property type="evidence" value="ECO:0007669"/>
    <property type="project" value="UniProtKB-EC"/>
</dbReference>
<dbReference type="GO" id="GO:0016567">
    <property type="term" value="P:protein ubiquitination"/>
    <property type="evidence" value="ECO:0007669"/>
    <property type="project" value="UniProtKB-UniPathway"/>
</dbReference>
<dbReference type="Gene3D" id="3.10.110.10">
    <property type="entry name" value="Ubiquitin Conjugating Enzyme"/>
    <property type="match status" value="1"/>
</dbReference>
<dbReference type="InterPro" id="IPR050113">
    <property type="entry name" value="Ub_conjugating_enzyme"/>
</dbReference>
<dbReference type="InterPro" id="IPR000608">
    <property type="entry name" value="UBQ-conjugat_E2_core"/>
</dbReference>
<dbReference type="InterPro" id="IPR016135">
    <property type="entry name" value="UBQ-conjugating_enzyme/RWD"/>
</dbReference>
<dbReference type="PANTHER" id="PTHR24067">
    <property type="entry name" value="UBIQUITIN-CONJUGATING ENZYME E2"/>
    <property type="match status" value="1"/>
</dbReference>
<dbReference type="Pfam" id="PF00179">
    <property type="entry name" value="UQ_con"/>
    <property type="match status" value="1"/>
</dbReference>
<dbReference type="SMART" id="SM00212">
    <property type="entry name" value="UBCc"/>
    <property type="match status" value="1"/>
</dbReference>
<dbReference type="SUPFAM" id="SSF54495">
    <property type="entry name" value="UBC-like"/>
    <property type="match status" value="1"/>
</dbReference>
<dbReference type="PROSITE" id="PS50127">
    <property type="entry name" value="UBC_2"/>
    <property type="match status" value="1"/>
</dbReference>
<feature type="chain" id="PRO_0000383031" description="Probable ubiquitin-conjugating enzyme E2 ECU01_1010">
    <location>
        <begin position="1"/>
        <end position="216"/>
    </location>
</feature>
<feature type="domain" description="UBC core" evidence="1">
    <location>
        <begin position="29"/>
        <end position="196"/>
    </location>
</feature>
<feature type="region of interest" description="Disordered" evidence="2">
    <location>
        <begin position="1"/>
        <end position="29"/>
    </location>
</feature>
<feature type="compositionally biased region" description="Basic residues" evidence="2">
    <location>
        <begin position="1"/>
        <end position="10"/>
    </location>
</feature>
<feature type="active site" description="Glycyl thioester intermediate" evidence="1">
    <location>
        <position position="120"/>
    </location>
</feature>
<keyword id="KW-1185">Reference proteome</keyword>
<keyword id="KW-0808">Transferase</keyword>
<keyword id="KW-0833">Ubl conjugation pathway</keyword>
<protein>
    <recommendedName>
        <fullName>Probable ubiquitin-conjugating enzyme E2 ECU01_1010</fullName>
        <ecNumber>2.3.2.23</ecNumber>
    </recommendedName>
    <alternativeName>
        <fullName>E2 ubiquitin-conjugating enzyme ECU01_1010</fullName>
    </alternativeName>
</protein>
<proteinExistence type="evidence at protein level"/>
<reference key="1">
    <citation type="journal article" date="2001" name="Genome Res.">
        <title>Sequence and analysis of chromosome I of the amitochondriate intracellular parasite Encephalitozoon cuniculi (Microspora).</title>
        <authorList>
            <person name="Peyret P."/>
            <person name="Katinka M.D."/>
            <person name="Duprat S."/>
            <person name="Duffieux F."/>
            <person name="Barbe V."/>
            <person name="Barbazanges M."/>
            <person name="Weissenbach J."/>
            <person name="Saurin W."/>
            <person name="Vivares C.P."/>
        </authorList>
    </citation>
    <scope>NUCLEOTIDE SEQUENCE [LARGE SCALE GENOMIC DNA]</scope>
    <source>
        <strain>GB-M1</strain>
    </source>
</reference>
<reference key="2">
    <citation type="journal article" date="2001" name="Nature">
        <title>Genome sequence and gene compaction of the eukaryote parasite Encephalitozoon cuniculi.</title>
        <authorList>
            <person name="Katinka M.D."/>
            <person name="Duprat S."/>
            <person name="Cornillot E."/>
            <person name="Metenier G."/>
            <person name="Thomarat F."/>
            <person name="Prensier G."/>
            <person name="Barbe V."/>
            <person name="Peyretaillade E."/>
            <person name="Brottier P."/>
            <person name="Wincker P."/>
            <person name="Delbac F."/>
            <person name="El Alaoui H."/>
            <person name="Peyret P."/>
            <person name="Saurin W."/>
            <person name="Gouy M."/>
            <person name="Weissenbach J."/>
            <person name="Vivares C.P."/>
        </authorList>
    </citation>
    <scope>NUCLEOTIDE SEQUENCE [LARGE SCALE GENOMIC DNA]</scope>
    <source>
        <strain>GB-M1</strain>
    </source>
</reference>
<reference key="3">
    <citation type="journal article" date="2006" name="Proteomics">
        <title>Proteomic analysis of the eukaryotic parasite Encephalitozoon cuniculi (microsporidia): a reference map for proteins expressed in late sporogonial stages.</title>
        <authorList>
            <person name="Brosson D."/>
            <person name="Kuhn L."/>
            <person name="Delbac F."/>
            <person name="Garin J."/>
            <person name="Vivares C.P."/>
            <person name="Texier C."/>
        </authorList>
    </citation>
    <scope>IDENTIFICATION BY MASS SPECTROMETRY [LARGE SCALE ANALYSIS]</scope>
    <scope>DEVELOPMENTAL STAGE</scope>
</reference>
<sequence length="216" mass="25055">MFKPSAHRRLPREDDIIQEDDEDGPLWPSALRRLSNEEERLKIADGDERKLFSAYPRGSMENRDYKVWDIYFTLGGDSLYAGRILKAVMKFPSSYPLRPPTLKFVSKMFHPNIYEDGKMCISILEEDKQQDSSVFGDPKDKWTPVQNIRTIVMSIVVILNSPNISSPANVDASVMYRDNPEEYIKEVIRIAREEDEKLRRTDPQAREVALQMKAEN</sequence>
<gene>
    <name type="ordered locus">ECU01_1010</name>
</gene>
<evidence type="ECO:0000255" key="1">
    <source>
        <dbReference type="PROSITE-ProRule" id="PRU00388"/>
    </source>
</evidence>
<evidence type="ECO:0000256" key="2">
    <source>
        <dbReference type="SAM" id="MobiDB-lite"/>
    </source>
</evidence>
<evidence type="ECO:0000269" key="3">
    <source>
    </source>
</evidence>
<organism>
    <name type="scientific">Encephalitozoon cuniculi (strain GB-M1)</name>
    <name type="common">Microsporidian parasite</name>
    <dbReference type="NCBI Taxonomy" id="284813"/>
    <lineage>
        <taxon>Eukaryota</taxon>
        <taxon>Fungi</taxon>
        <taxon>Fungi incertae sedis</taxon>
        <taxon>Microsporidia</taxon>
        <taxon>Unikaryonidae</taxon>
        <taxon>Encephalitozoon</taxon>
    </lineage>
</organism>
<name>Y1A1_ENCCU</name>